<keyword id="KW-0238">DNA-binding</keyword>
<keyword id="KW-0597">Phosphoprotein</keyword>
<keyword id="KW-1185">Reference proteome</keyword>
<keyword id="KW-0804">Transcription</keyword>
<keyword id="KW-0805">Transcription regulation</keyword>
<keyword id="KW-0902">Two-component regulatory system</keyword>
<organism>
    <name type="scientific">Shigella flexneri</name>
    <dbReference type="NCBI Taxonomy" id="623"/>
    <lineage>
        <taxon>Bacteria</taxon>
        <taxon>Pseudomonadati</taxon>
        <taxon>Pseudomonadota</taxon>
        <taxon>Gammaproteobacteria</taxon>
        <taxon>Enterobacterales</taxon>
        <taxon>Enterobacteriaceae</taxon>
        <taxon>Shigella</taxon>
    </lineage>
</organism>
<dbReference type="EMBL" id="AE005674">
    <property type="protein sequence ID" value="AAN43723.2"/>
    <property type="molecule type" value="Genomic_DNA"/>
</dbReference>
<dbReference type="EMBL" id="AE014073">
    <property type="protein sequence ID" value="AAP17541.1"/>
    <property type="molecule type" value="Genomic_DNA"/>
</dbReference>
<dbReference type="RefSeq" id="NP_708016.2">
    <property type="nucleotide sequence ID" value="NC_004337.2"/>
</dbReference>
<dbReference type="RefSeq" id="WP_005048999.1">
    <property type="nucleotide sequence ID" value="NZ_WPGW01000249.1"/>
</dbReference>
<dbReference type="SMR" id="P59640"/>
<dbReference type="STRING" id="198214.SF2197"/>
<dbReference type="PaxDb" id="198214-SF2197"/>
<dbReference type="GeneID" id="1027504"/>
<dbReference type="KEGG" id="sfl:SF2197"/>
<dbReference type="KEGG" id="sfx:S2324"/>
<dbReference type="PATRIC" id="fig|198214.7.peg.2625"/>
<dbReference type="HOGENOM" id="CLU_000445_14_1_6"/>
<dbReference type="Proteomes" id="UP000001006">
    <property type="component" value="Chromosome"/>
</dbReference>
<dbReference type="Proteomes" id="UP000002673">
    <property type="component" value="Chromosome"/>
</dbReference>
<dbReference type="GO" id="GO:0003677">
    <property type="term" value="F:DNA binding"/>
    <property type="evidence" value="ECO:0007669"/>
    <property type="project" value="UniProtKB-KW"/>
</dbReference>
<dbReference type="GO" id="GO:0000156">
    <property type="term" value="F:phosphorelay response regulator activity"/>
    <property type="evidence" value="ECO:0007669"/>
    <property type="project" value="InterPro"/>
</dbReference>
<dbReference type="CDD" id="cd17532">
    <property type="entry name" value="REC_LytTR_AlgR-like"/>
    <property type="match status" value="1"/>
</dbReference>
<dbReference type="FunFam" id="2.40.50.1020:FF:000001">
    <property type="entry name" value="Two-component response regulator yehT"/>
    <property type="match status" value="1"/>
</dbReference>
<dbReference type="FunFam" id="3.40.50.2300:FF:000051">
    <property type="entry name" value="Two-component response regulator yehT"/>
    <property type="match status" value="1"/>
</dbReference>
<dbReference type="Gene3D" id="3.40.50.2300">
    <property type="match status" value="1"/>
</dbReference>
<dbReference type="Gene3D" id="2.40.50.1020">
    <property type="entry name" value="LytTr DNA-binding domain"/>
    <property type="match status" value="1"/>
</dbReference>
<dbReference type="InterPro" id="IPR011006">
    <property type="entry name" value="CheY-like_superfamily"/>
</dbReference>
<dbReference type="InterPro" id="IPR046947">
    <property type="entry name" value="LytR-like"/>
</dbReference>
<dbReference type="InterPro" id="IPR007492">
    <property type="entry name" value="LytTR_DNA-bd_dom"/>
</dbReference>
<dbReference type="InterPro" id="IPR001789">
    <property type="entry name" value="Sig_transdc_resp-reg_receiver"/>
</dbReference>
<dbReference type="NCBIfam" id="NF008677">
    <property type="entry name" value="PRK11697.1"/>
    <property type="match status" value="1"/>
</dbReference>
<dbReference type="PANTHER" id="PTHR37299:SF1">
    <property type="entry name" value="STAGE 0 SPORULATION PROTEIN A HOMOLOG"/>
    <property type="match status" value="1"/>
</dbReference>
<dbReference type="PANTHER" id="PTHR37299">
    <property type="entry name" value="TRANSCRIPTIONAL REGULATOR-RELATED"/>
    <property type="match status" value="1"/>
</dbReference>
<dbReference type="Pfam" id="PF04397">
    <property type="entry name" value="LytTR"/>
    <property type="match status" value="1"/>
</dbReference>
<dbReference type="Pfam" id="PF00072">
    <property type="entry name" value="Response_reg"/>
    <property type="match status" value="1"/>
</dbReference>
<dbReference type="SMART" id="SM00850">
    <property type="entry name" value="LytTR"/>
    <property type="match status" value="1"/>
</dbReference>
<dbReference type="SMART" id="SM00448">
    <property type="entry name" value="REC"/>
    <property type="match status" value="1"/>
</dbReference>
<dbReference type="SUPFAM" id="SSF52172">
    <property type="entry name" value="CheY-like"/>
    <property type="match status" value="1"/>
</dbReference>
<dbReference type="PROSITE" id="PS50930">
    <property type="entry name" value="HTH_LYTTR"/>
    <property type="match status" value="1"/>
</dbReference>
<dbReference type="PROSITE" id="PS50110">
    <property type="entry name" value="RESPONSE_REGULATORY"/>
    <property type="match status" value="1"/>
</dbReference>
<sequence>MIKVLIVDDEPLARENLRIFLQEQSDIEIVGECSNAVEGIGAVHKLRPDVLFLDIQMPRISGLEMVGMLDPEHRPYIVFLTAFDEYAIKAFEEHAFDYLLKPIDEARLEKTLARLRQERSKQDVSLLPENQQALKFIPCTGHSRIYLLQMKDVAFVSSRMSGVYVTSHEGKEGFTELTLRTLESRTPLLRCHRQYLVNLAHLQEIRLEDNGQAELILRNGLTVPVSRRYLKSLKEAIGL</sequence>
<proteinExistence type="inferred from homology"/>
<evidence type="ECO:0000250" key="1">
    <source>
        <dbReference type="UniProtKB" id="P0AFT5"/>
    </source>
</evidence>
<evidence type="ECO:0000255" key="2">
    <source>
        <dbReference type="PROSITE-ProRule" id="PRU00112"/>
    </source>
</evidence>
<evidence type="ECO:0000255" key="3">
    <source>
        <dbReference type="PROSITE-ProRule" id="PRU00169"/>
    </source>
</evidence>
<feature type="chain" id="PRO_0000081369" description="Transcriptional regulatory protein BtsR">
    <location>
        <begin position="1"/>
        <end position="239"/>
    </location>
</feature>
<feature type="domain" description="Response regulatory" evidence="3">
    <location>
        <begin position="3"/>
        <end position="116"/>
    </location>
</feature>
<feature type="domain" description="HTH LytTR-type" evidence="2">
    <location>
        <begin position="137"/>
        <end position="239"/>
    </location>
</feature>
<feature type="modified residue" description="4-aspartylphosphate" evidence="3">
    <location>
        <position position="54"/>
    </location>
</feature>
<gene>
    <name evidence="1" type="primary">btsR</name>
    <name type="synonym">yehT</name>
    <name type="ordered locus">SF2197</name>
    <name type="ordered locus">S2324</name>
</gene>
<accession>P59640</accession>
<reference key="1">
    <citation type="journal article" date="2002" name="Nucleic Acids Res.">
        <title>Genome sequence of Shigella flexneri 2a: insights into pathogenicity through comparison with genomes of Escherichia coli K12 and O157.</title>
        <authorList>
            <person name="Jin Q."/>
            <person name="Yuan Z."/>
            <person name="Xu J."/>
            <person name="Wang Y."/>
            <person name="Shen Y."/>
            <person name="Lu W."/>
            <person name="Wang J."/>
            <person name="Liu H."/>
            <person name="Yang J."/>
            <person name="Yang F."/>
            <person name="Zhang X."/>
            <person name="Zhang J."/>
            <person name="Yang G."/>
            <person name="Wu H."/>
            <person name="Qu D."/>
            <person name="Dong J."/>
            <person name="Sun L."/>
            <person name="Xue Y."/>
            <person name="Zhao A."/>
            <person name="Gao Y."/>
            <person name="Zhu J."/>
            <person name="Kan B."/>
            <person name="Ding K."/>
            <person name="Chen S."/>
            <person name="Cheng H."/>
            <person name="Yao Z."/>
            <person name="He B."/>
            <person name="Chen R."/>
            <person name="Ma D."/>
            <person name="Qiang B."/>
            <person name="Wen Y."/>
            <person name="Hou Y."/>
            <person name="Yu J."/>
        </authorList>
    </citation>
    <scope>NUCLEOTIDE SEQUENCE [LARGE SCALE GENOMIC DNA]</scope>
    <source>
        <strain>301 / Serotype 2a</strain>
    </source>
</reference>
<reference key="2">
    <citation type="journal article" date="2003" name="Infect. Immun.">
        <title>Complete genome sequence and comparative genomics of Shigella flexneri serotype 2a strain 2457T.</title>
        <authorList>
            <person name="Wei J."/>
            <person name="Goldberg M.B."/>
            <person name="Burland V."/>
            <person name="Venkatesan M.M."/>
            <person name="Deng W."/>
            <person name="Fournier G."/>
            <person name="Mayhew G.F."/>
            <person name="Plunkett G. III"/>
            <person name="Rose D.J."/>
            <person name="Darling A."/>
            <person name="Mau B."/>
            <person name="Perna N.T."/>
            <person name="Payne S.M."/>
            <person name="Runyen-Janecky L.J."/>
            <person name="Zhou S."/>
            <person name="Schwartz D.C."/>
            <person name="Blattner F.R."/>
        </authorList>
    </citation>
    <scope>NUCLEOTIDE SEQUENCE [LARGE SCALE GENOMIC DNA]</scope>
    <source>
        <strain>ATCC 700930 / 2457T / Serotype 2a</strain>
    </source>
</reference>
<comment type="function">
    <text evidence="1">Member of the two-component regulatory system BtsS/BtsR. BtsR regulates expression of btsT by binding to its promoter region.</text>
</comment>
<comment type="PTM">
    <text evidence="1">Phosphorylated by BtsS.</text>
</comment>
<name>BTSR_SHIFL</name>
<protein>
    <recommendedName>
        <fullName evidence="1">Transcriptional regulatory protein BtsR</fullName>
    </recommendedName>
</protein>